<proteinExistence type="inferred from homology"/>
<feature type="chain" id="PRO_0000058741" description="Indian hedgehog protein">
    <location>
        <begin position="1" status="less than"/>
        <end position="58" status="greater than"/>
    </location>
</feature>
<feature type="binding site" evidence="2">
    <location>
        <position position="13"/>
    </location>
    <ligand>
        <name>Ca(2+)</name>
        <dbReference type="ChEBI" id="CHEBI:29108"/>
        <label>1</label>
    </ligand>
</feature>
<feature type="binding site" evidence="2">
    <location>
        <position position="14"/>
    </location>
    <ligand>
        <name>Ca(2+)</name>
        <dbReference type="ChEBI" id="CHEBI:29108"/>
        <label>1</label>
    </ligand>
</feature>
<feature type="binding site" evidence="2">
    <location>
        <position position="14"/>
    </location>
    <ligand>
        <name>Ca(2+)</name>
        <dbReference type="ChEBI" id="CHEBI:29108"/>
        <label>2</label>
    </ligand>
</feature>
<feature type="binding site" evidence="2">
    <location>
        <position position="17"/>
    </location>
    <ligand>
        <name>Ca(2+)</name>
        <dbReference type="ChEBI" id="CHEBI:29108"/>
        <label>2</label>
    </ligand>
</feature>
<feature type="binding site" evidence="2">
    <location>
        <position position="19"/>
    </location>
    <ligand>
        <name>Ca(2+)</name>
        <dbReference type="ChEBI" id="CHEBI:29108"/>
        <label>2</label>
    </ligand>
</feature>
<feature type="binding site" evidence="2">
    <location>
        <position position="28"/>
    </location>
    <ligand>
        <name>Zn(2+)</name>
        <dbReference type="ChEBI" id="CHEBI:29105"/>
    </ligand>
</feature>
<feature type="binding site" evidence="2">
    <location>
        <position position="35"/>
    </location>
    <ligand>
        <name>Zn(2+)</name>
        <dbReference type="ChEBI" id="CHEBI:29105"/>
    </ligand>
</feature>
<feature type="non-terminal residue">
    <location>
        <position position="1"/>
    </location>
</feature>
<feature type="non-terminal residue">
    <location>
        <position position="58"/>
    </location>
</feature>
<reference key="1">
    <citation type="journal article" date="1996" name="Proc. Natl. Acad. Sci. U.S.A.">
        <title>Evolutionary analyses of hedgehog and Hoxd-10 genes in fish species closely related to the zebrafish.</title>
        <authorList>
            <person name="Zardoya R."/>
            <person name="Abouheif E."/>
            <person name="Meyer A."/>
        </authorList>
    </citation>
    <scope>NUCLEOTIDE SEQUENCE [GENOMIC DNA]</scope>
    <source>
        <tissue>Muscle</tissue>
    </source>
</reference>
<name>IHH_DANKE</name>
<keyword id="KW-0068">Autocatalytic cleavage</keyword>
<keyword id="KW-0106">Calcium</keyword>
<keyword id="KW-1003">Cell membrane</keyword>
<keyword id="KW-0217">Developmental protein</keyword>
<keyword id="KW-0378">Hydrolase</keyword>
<keyword id="KW-0449">Lipoprotein</keyword>
<keyword id="KW-0472">Membrane</keyword>
<keyword id="KW-0479">Metal-binding</keyword>
<keyword id="KW-0564">Palmitate</keyword>
<keyword id="KW-0645">Protease</keyword>
<keyword id="KW-0964">Secreted</keyword>
<keyword id="KW-0862">Zinc</keyword>
<protein>
    <recommendedName>
        <fullName>Indian hedgehog protein</fullName>
        <shortName>IHH</shortName>
    </recommendedName>
</protein>
<sequence length="58" mass="6658">VMNLWPGVRLRVTEGWDEDGHHSEESLHYEGRAVDITTSDRDRNKYAMLARLAVEAGF</sequence>
<dbReference type="EMBL" id="U51376">
    <property type="protein sequence ID" value="AAB38604.1"/>
    <property type="molecule type" value="Genomic_DNA"/>
</dbReference>
<dbReference type="SMR" id="P79711"/>
<dbReference type="GO" id="GO:0005615">
    <property type="term" value="C:extracellular space"/>
    <property type="evidence" value="ECO:0007669"/>
    <property type="project" value="TreeGrafter"/>
</dbReference>
<dbReference type="GO" id="GO:0005886">
    <property type="term" value="C:plasma membrane"/>
    <property type="evidence" value="ECO:0007669"/>
    <property type="project" value="UniProtKB-SubCell"/>
</dbReference>
<dbReference type="GO" id="GO:0005509">
    <property type="term" value="F:calcium ion binding"/>
    <property type="evidence" value="ECO:0007669"/>
    <property type="project" value="TreeGrafter"/>
</dbReference>
<dbReference type="GO" id="GO:0005113">
    <property type="term" value="F:patched binding"/>
    <property type="evidence" value="ECO:0007669"/>
    <property type="project" value="TreeGrafter"/>
</dbReference>
<dbReference type="GO" id="GO:0008233">
    <property type="term" value="F:peptidase activity"/>
    <property type="evidence" value="ECO:0007669"/>
    <property type="project" value="UniProtKB-KW"/>
</dbReference>
<dbReference type="GO" id="GO:0001708">
    <property type="term" value="P:cell fate specification"/>
    <property type="evidence" value="ECO:0007669"/>
    <property type="project" value="TreeGrafter"/>
</dbReference>
<dbReference type="GO" id="GO:0007267">
    <property type="term" value="P:cell-cell signaling"/>
    <property type="evidence" value="ECO:0007669"/>
    <property type="project" value="InterPro"/>
</dbReference>
<dbReference type="GO" id="GO:0006508">
    <property type="term" value="P:proteolysis"/>
    <property type="evidence" value="ECO:0007669"/>
    <property type="project" value="UniProtKB-KW"/>
</dbReference>
<dbReference type="GO" id="GO:0010468">
    <property type="term" value="P:regulation of gene expression"/>
    <property type="evidence" value="ECO:0007669"/>
    <property type="project" value="TreeGrafter"/>
</dbReference>
<dbReference type="GO" id="GO:0007224">
    <property type="term" value="P:smoothened signaling pathway"/>
    <property type="evidence" value="ECO:0007669"/>
    <property type="project" value="TreeGrafter"/>
</dbReference>
<dbReference type="Gene3D" id="3.30.1380.10">
    <property type="match status" value="1"/>
</dbReference>
<dbReference type="InterPro" id="IPR001657">
    <property type="entry name" value="Hedgehog"/>
</dbReference>
<dbReference type="InterPro" id="IPR009045">
    <property type="entry name" value="Hedgehog_sig/DD-Pept_Zn-bd_sf"/>
</dbReference>
<dbReference type="InterPro" id="IPR050387">
    <property type="entry name" value="Hedgehog_Signaling"/>
</dbReference>
<dbReference type="InterPro" id="IPR000320">
    <property type="entry name" value="Hedgehog_signalling_dom"/>
</dbReference>
<dbReference type="PANTHER" id="PTHR11889">
    <property type="entry name" value="HEDGEHOG"/>
    <property type="match status" value="1"/>
</dbReference>
<dbReference type="PANTHER" id="PTHR11889:SF39">
    <property type="entry name" value="INDIAN HEDGEHOG PROTEIN"/>
    <property type="match status" value="1"/>
</dbReference>
<dbReference type="Pfam" id="PF01085">
    <property type="entry name" value="HH_signal"/>
    <property type="match status" value="1"/>
</dbReference>
<dbReference type="PRINTS" id="PR00632">
    <property type="entry name" value="SONICHHOG"/>
</dbReference>
<dbReference type="SUPFAM" id="SSF55166">
    <property type="entry name" value="Hedgehog/DD-peptidase"/>
    <property type="match status" value="1"/>
</dbReference>
<organism>
    <name type="scientific">Danio kerri</name>
    <name type="common">Blue danio</name>
    <name type="synonym">Brachydanio kerri</name>
    <dbReference type="NCBI Taxonomy" id="38750"/>
    <lineage>
        <taxon>Eukaryota</taxon>
        <taxon>Metazoa</taxon>
        <taxon>Chordata</taxon>
        <taxon>Craniata</taxon>
        <taxon>Vertebrata</taxon>
        <taxon>Euteleostomi</taxon>
        <taxon>Actinopterygii</taxon>
        <taxon>Neopterygii</taxon>
        <taxon>Teleostei</taxon>
        <taxon>Ostariophysi</taxon>
        <taxon>Cypriniformes</taxon>
        <taxon>Danionidae</taxon>
        <taxon>Danioninae</taxon>
        <taxon>Danio</taxon>
    </lineage>
</organism>
<gene>
    <name type="primary">ihh</name>
</gene>
<comment type="function">
    <text evidence="1">Intercellular signal essential for a variety of patterning events during development.</text>
</comment>
<comment type="subcellular location">
    <subcellularLocation>
        <location evidence="1">Cell membrane</location>
    </subcellularLocation>
    <subcellularLocation>
        <location evidence="1">Secreted</location>
        <location evidence="1">Extracellular space</location>
    </subcellularLocation>
    <text evidence="1">Indian hedgehog protein N-product: Cell membrane; Lipid-anchor; Extracellular side. The N-terminal peptide remains associated with the cell surface. Indian hedgehog protein C-product: Secreted, extracellular space. The C-terminal peptide diffuses from the cell.</text>
</comment>
<comment type="domain">
    <text evidence="1">The indian hedgehog protein N-product binds calcium and zinc ions; this stabilizes the protein fold and is essential for protein-protein interactions mediated by this domain.</text>
</comment>
<comment type="PTM">
    <text evidence="1">The C-terminal domain displays an autoproteolysis activity and a cholesterol transferase activity. Both activities result in the cleavage of the full-length protein and covalent attachment of a cholesterol moiety to the C-terminal of the newly generated N-terminal fragment (N-product). The N-product is the active species in both local and long-range signaling, whereas the C-product has no signaling activity (By similarity).</text>
</comment>
<comment type="PTM">
    <text evidence="1">Cholesterylation is required for N-product targeting to lipid rafts and multimerization.</text>
</comment>
<comment type="PTM">
    <text evidence="1">N-palmitoylation is required for N-product multimerization and full activity.</text>
</comment>
<comment type="similarity">
    <text evidence="3">Belongs to the hedgehog family.</text>
</comment>
<evidence type="ECO:0000250" key="1"/>
<evidence type="ECO:0000250" key="2">
    <source>
        <dbReference type="UniProtKB" id="Q14623"/>
    </source>
</evidence>
<evidence type="ECO:0000305" key="3"/>
<accession>P79711</accession>